<dbReference type="EMBL" id="CP000083">
    <property type="protein sequence ID" value="AAZ27381.1"/>
    <property type="molecule type" value="Genomic_DNA"/>
</dbReference>
<dbReference type="RefSeq" id="WP_011045771.1">
    <property type="nucleotide sequence ID" value="NC_003910.7"/>
</dbReference>
<dbReference type="SMR" id="Q47U32"/>
<dbReference type="STRING" id="167879.CPS_5053"/>
<dbReference type="KEGG" id="cps:CPS_5053"/>
<dbReference type="eggNOG" id="COG0230">
    <property type="taxonomic scope" value="Bacteria"/>
</dbReference>
<dbReference type="HOGENOM" id="CLU_129938_2_0_6"/>
<dbReference type="Proteomes" id="UP000000547">
    <property type="component" value="Chromosome"/>
</dbReference>
<dbReference type="GO" id="GO:1990904">
    <property type="term" value="C:ribonucleoprotein complex"/>
    <property type="evidence" value="ECO:0007669"/>
    <property type="project" value="UniProtKB-KW"/>
</dbReference>
<dbReference type="GO" id="GO:0005840">
    <property type="term" value="C:ribosome"/>
    <property type="evidence" value="ECO:0007669"/>
    <property type="project" value="UniProtKB-KW"/>
</dbReference>
<dbReference type="GO" id="GO:0003735">
    <property type="term" value="F:structural constituent of ribosome"/>
    <property type="evidence" value="ECO:0007669"/>
    <property type="project" value="InterPro"/>
</dbReference>
<dbReference type="GO" id="GO:0006412">
    <property type="term" value="P:translation"/>
    <property type="evidence" value="ECO:0007669"/>
    <property type="project" value="UniProtKB-UniRule"/>
</dbReference>
<dbReference type="FunFam" id="1.10.287.3980:FF:000001">
    <property type="entry name" value="Mitochondrial ribosomal protein L34"/>
    <property type="match status" value="1"/>
</dbReference>
<dbReference type="Gene3D" id="1.10.287.3980">
    <property type="match status" value="1"/>
</dbReference>
<dbReference type="HAMAP" id="MF_00391">
    <property type="entry name" value="Ribosomal_bL34"/>
    <property type="match status" value="1"/>
</dbReference>
<dbReference type="InterPro" id="IPR000271">
    <property type="entry name" value="Ribosomal_bL34"/>
</dbReference>
<dbReference type="InterPro" id="IPR020939">
    <property type="entry name" value="Ribosomal_bL34_CS"/>
</dbReference>
<dbReference type="NCBIfam" id="TIGR01030">
    <property type="entry name" value="rpmH_bact"/>
    <property type="match status" value="1"/>
</dbReference>
<dbReference type="PANTHER" id="PTHR14503:SF4">
    <property type="entry name" value="LARGE RIBOSOMAL SUBUNIT PROTEIN BL34M"/>
    <property type="match status" value="1"/>
</dbReference>
<dbReference type="PANTHER" id="PTHR14503">
    <property type="entry name" value="MITOCHONDRIAL RIBOSOMAL PROTEIN 34 FAMILY MEMBER"/>
    <property type="match status" value="1"/>
</dbReference>
<dbReference type="Pfam" id="PF00468">
    <property type="entry name" value="Ribosomal_L34"/>
    <property type="match status" value="1"/>
</dbReference>
<dbReference type="PROSITE" id="PS00784">
    <property type="entry name" value="RIBOSOMAL_L34"/>
    <property type="match status" value="1"/>
</dbReference>
<feature type="chain" id="PRO_1000013325" description="Large ribosomal subunit protein bL34">
    <location>
        <begin position="1"/>
        <end position="44"/>
    </location>
</feature>
<sequence length="44" mass="5107">MKRTFQPSVLKRKRNHGFRARMATKNGRAVIARRRAKGRARLSA</sequence>
<proteinExistence type="inferred from homology"/>
<keyword id="KW-0687">Ribonucleoprotein</keyword>
<keyword id="KW-0689">Ribosomal protein</keyword>
<gene>
    <name evidence="1" type="primary">rpmH</name>
    <name type="ordered locus">CPS_5053</name>
</gene>
<accession>Q47U32</accession>
<protein>
    <recommendedName>
        <fullName evidence="1">Large ribosomal subunit protein bL34</fullName>
    </recommendedName>
    <alternativeName>
        <fullName evidence="2">50S ribosomal protein L34</fullName>
    </alternativeName>
</protein>
<organism>
    <name type="scientific">Colwellia psychrerythraea (strain 34H / ATCC BAA-681)</name>
    <name type="common">Vibrio psychroerythus</name>
    <dbReference type="NCBI Taxonomy" id="167879"/>
    <lineage>
        <taxon>Bacteria</taxon>
        <taxon>Pseudomonadati</taxon>
        <taxon>Pseudomonadota</taxon>
        <taxon>Gammaproteobacteria</taxon>
        <taxon>Alteromonadales</taxon>
        <taxon>Colwelliaceae</taxon>
        <taxon>Colwellia</taxon>
    </lineage>
</organism>
<comment type="similarity">
    <text evidence="1">Belongs to the bacterial ribosomal protein bL34 family.</text>
</comment>
<reference key="1">
    <citation type="journal article" date="2005" name="Proc. Natl. Acad. Sci. U.S.A.">
        <title>The psychrophilic lifestyle as revealed by the genome sequence of Colwellia psychrerythraea 34H through genomic and proteomic analyses.</title>
        <authorList>
            <person name="Methe B.A."/>
            <person name="Nelson K.E."/>
            <person name="Deming J.W."/>
            <person name="Momen B."/>
            <person name="Melamud E."/>
            <person name="Zhang X."/>
            <person name="Moult J."/>
            <person name="Madupu R."/>
            <person name="Nelson W.C."/>
            <person name="Dodson R.J."/>
            <person name="Brinkac L.M."/>
            <person name="Daugherty S.C."/>
            <person name="Durkin A.S."/>
            <person name="DeBoy R.T."/>
            <person name="Kolonay J.F."/>
            <person name="Sullivan S.A."/>
            <person name="Zhou L."/>
            <person name="Davidsen T.M."/>
            <person name="Wu M."/>
            <person name="Huston A.L."/>
            <person name="Lewis M."/>
            <person name="Weaver B."/>
            <person name="Weidman J.F."/>
            <person name="Khouri H."/>
            <person name="Utterback T.R."/>
            <person name="Feldblyum T.V."/>
            <person name="Fraser C.M."/>
        </authorList>
    </citation>
    <scope>NUCLEOTIDE SEQUENCE [LARGE SCALE GENOMIC DNA]</scope>
    <source>
        <strain>34H / ATCC BAA-681</strain>
    </source>
</reference>
<evidence type="ECO:0000255" key="1">
    <source>
        <dbReference type="HAMAP-Rule" id="MF_00391"/>
    </source>
</evidence>
<evidence type="ECO:0000305" key="2"/>
<name>RL34_COLP3</name>